<comment type="function">
    <text evidence="1">Produces ATP from ADP in the presence of a proton gradient across the membrane. The alpha chain is a regulatory subunit.</text>
</comment>
<comment type="catalytic activity">
    <reaction evidence="1">
        <text>ATP + H2O + 4 H(+)(in) = ADP + phosphate + 5 H(+)(out)</text>
        <dbReference type="Rhea" id="RHEA:57720"/>
        <dbReference type="ChEBI" id="CHEBI:15377"/>
        <dbReference type="ChEBI" id="CHEBI:15378"/>
        <dbReference type="ChEBI" id="CHEBI:30616"/>
        <dbReference type="ChEBI" id="CHEBI:43474"/>
        <dbReference type="ChEBI" id="CHEBI:456216"/>
        <dbReference type="EC" id="7.1.2.2"/>
    </reaction>
</comment>
<comment type="subunit">
    <text evidence="1">F-type ATPases have 2 components, CF(1) - the catalytic core - and CF(0) - the membrane proton channel. CF(1) has five subunits: alpha(3), beta(3), gamma(1), delta(1), epsilon(1). CF(0) has three main subunits: a(1), b(2) and c(9-12). The alpha and beta chains form an alternating ring which encloses part of the gamma chain. CF(1) is attached to CF(0) by a central stalk formed by the gamma and epsilon chains, while a peripheral stalk is formed by the delta and b chains.</text>
</comment>
<comment type="subcellular location">
    <subcellularLocation>
        <location evidence="1">Cell membrane</location>
        <topology evidence="1">Peripheral membrane protein</topology>
    </subcellularLocation>
</comment>
<comment type="similarity">
    <text evidence="1">Belongs to the ATPase alpha/beta chains family.</text>
</comment>
<feature type="chain" id="PRO_1000143446" description="ATP synthase subunit alpha">
    <location>
        <begin position="1"/>
        <end position="502"/>
    </location>
</feature>
<feature type="binding site" evidence="1">
    <location>
        <begin position="169"/>
        <end position="176"/>
    </location>
    <ligand>
        <name>ATP</name>
        <dbReference type="ChEBI" id="CHEBI:30616"/>
    </ligand>
</feature>
<feature type="site" description="Required for activity" evidence="1">
    <location>
        <position position="362"/>
    </location>
</feature>
<protein>
    <recommendedName>
        <fullName evidence="1">ATP synthase subunit alpha</fullName>
        <ecNumber evidence="1">7.1.2.2</ecNumber>
    </recommendedName>
    <alternativeName>
        <fullName evidence="1">ATP synthase F1 sector subunit alpha</fullName>
    </alternativeName>
    <alternativeName>
        <fullName evidence="1">F-ATPase subunit alpha</fullName>
    </alternativeName>
</protein>
<proteinExistence type="inferred from homology"/>
<organism>
    <name type="scientific">Streptococcus pyogenes serotype M49 (strain NZ131)</name>
    <dbReference type="NCBI Taxonomy" id="471876"/>
    <lineage>
        <taxon>Bacteria</taxon>
        <taxon>Bacillati</taxon>
        <taxon>Bacillota</taxon>
        <taxon>Bacilli</taxon>
        <taxon>Lactobacillales</taxon>
        <taxon>Streptococcaceae</taxon>
        <taxon>Streptococcus</taxon>
    </lineage>
</organism>
<gene>
    <name evidence="1" type="primary">atpA</name>
    <name type="ordered locus">Spy49_0586</name>
</gene>
<accession>B5XKP9</accession>
<evidence type="ECO:0000255" key="1">
    <source>
        <dbReference type="HAMAP-Rule" id="MF_01346"/>
    </source>
</evidence>
<reference key="1">
    <citation type="journal article" date="2008" name="J. Bacteriol.">
        <title>Genome sequence of a nephritogenic and highly transformable M49 strain of Streptococcus pyogenes.</title>
        <authorList>
            <person name="McShan W.M."/>
            <person name="Ferretti J.J."/>
            <person name="Karasawa T."/>
            <person name="Suvorov A.N."/>
            <person name="Lin S."/>
            <person name="Qin B."/>
            <person name="Jia H."/>
            <person name="Kenton S."/>
            <person name="Najar F."/>
            <person name="Wu H."/>
            <person name="Scott J."/>
            <person name="Roe B.A."/>
            <person name="Savic D.J."/>
        </authorList>
    </citation>
    <scope>NUCLEOTIDE SEQUENCE [LARGE SCALE GENOMIC DNA]</scope>
    <source>
        <strain>NZ131</strain>
    </source>
</reference>
<keyword id="KW-0066">ATP synthesis</keyword>
<keyword id="KW-0067">ATP-binding</keyword>
<keyword id="KW-1003">Cell membrane</keyword>
<keyword id="KW-0139">CF(1)</keyword>
<keyword id="KW-0375">Hydrogen ion transport</keyword>
<keyword id="KW-0406">Ion transport</keyword>
<keyword id="KW-0472">Membrane</keyword>
<keyword id="KW-0547">Nucleotide-binding</keyword>
<keyword id="KW-1278">Translocase</keyword>
<keyword id="KW-0813">Transport</keyword>
<name>ATPA_STRPZ</name>
<sequence>MAINAQEISALIKKQIENFQPNFDVTETGIVTYIGDGIARARGLDNAMSGELLEFENGAYGMAQNLESNDVGIIILGDFSAIREGDVVKRTGKIMEVPVGEALIGRVVNPLGQPVDGLGDIETTGFRPVETPAPGVMQRKSVSEPLQTGLKAIDALVPIGRGQRELIIGDRQTGKTSVAIDAILNQKGQDMICIYVAIGQKESTVRTQVETLRRYGALDYTIVVTASASQPSPLLFIAPYAGVAMAEEFMYQGKHVLIVYDDLSKQAVAYRELSLLLRRPPGREAYPGDVFYLHSRLLERSAKVSDDLGGGSITALPFIETQAGDISAYIATNVISITDGQIFLQENLFNSGIRPAIDAGSSVSRVGGSAQIKAMKKVAGTLRLDLASYRELEAFTQFGSDLDAATQAKLNRGRRTVEILKQPLHKPLPVEKQVVILYALTHGFLDDVPVDDILAFEEALYDYFDVHYNDLFETIRTTKDLPEEAALDAAIKAFKEHSNFKS</sequence>
<dbReference type="EC" id="7.1.2.2" evidence="1"/>
<dbReference type="EMBL" id="CP000829">
    <property type="protein sequence ID" value="ACI60911.1"/>
    <property type="molecule type" value="Genomic_DNA"/>
</dbReference>
<dbReference type="SMR" id="B5XKP9"/>
<dbReference type="KEGG" id="soz:Spy49_0586"/>
<dbReference type="HOGENOM" id="CLU_010091_2_1_9"/>
<dbReference type="Proteomes" id="UP000001039">
    <property type="component" value="Chromosome"/>
</dbReference>
<dbReference type="GO" id="GO:0005886">
    <property type="term" value="C:plasma membrane"/>
    <property type="evidence" value="ECO:0007669"/>
    <property type="project" value="UniProtKB-SubCell"/>
</dbReference>
<dbReference type="GO" id="GO:0045259">
    <property type="term" value="C:proton-transporting ATP synthase complex"/>
    <property type="evidence" value="ECO:0007669"/>
    <property type="project" value="UniProtKB-KW"/>
</dbReference>
<dbReference type="GO" id="GO:0043531">
    <property type="term" value="F:ADP binding"/>
    <property type="evidence" value="ECO:0007669"/>
    <property type="project" value="TreeGrafter"/>
</dbReference>
<dbReference type="GO" id="GO:0005524">
    <property type="term" value="F:ATP binding"/>
    <property type="evidence" value="ECO:0007669"/>
    <property type="project" value="UniProtKB-UniRule"/>
</dbReference>
<dbReference type="GO" id="GO:0046933">
    <property type="term" value="F:proton-transporting ATP synthase activity, rotational mechanism"/>
    <property type="evidence" value="ECO:0007669"/>
    <property type="project" value="UniProtKB-UniRule"/>
</dbReference>
<dbReference type="CDD" id="cd18113">
    <property type="entry name" value="ATP-synt_F1_alpha_C"/>
    <property type="match status" value="1"/>
</dbReference>
<dbReference type="CDD" id="cd18116">
    <property type="entry name" value="ATP-synt_F1_alpha_N"/>
    <property type="match status" value="1"/>
</dbReference>
<dbReference type="CDD" id="cd01132">
    <property type="entry name" value="F1-ATPase_alpha_CD"/>
    <property type="match status" value="1"/>
</dbReference>
<dbReference type="FunFam" id="1.20.150.20:FF:000001">
    <property type="entry name" value="ATP synthase subunit alpha"/>
    <property type="match status" value="1"/>
</dbReference>
<dbReference type="FunFam" id="2.40.30.20:FF:000001">
    <property type="entry name" value="ATP synthase subunit alpha"/>
    <property type="match status" value="1"/>
</dbReference>
<dbReference type="FunFam" id="3.40.50.300:FF:000002">
    <property type="entry name" value="ATP synthase subunit alpha"/>
    <property type="match status" value="1"/>
</dbReference>
<dbReference type="Gene3D" id="2.40.30.20">
    <property type="match status" value="1"/>
</dbReference>
<dbReference type="Gene3D" id="1.20.150.20">
    <property type="entry name" value="ATP synthase alpha/beta chain, C-terminal domain"/>
    <property type="match status" value="1"/>
</dbReference>
<dbReference type="Gene3D" id="3.40.50.300">
    <property type="entry name" value="P-loop containing nucleotide triphosphate hydrolases"/>
    <property type="match status" value="1"/>
</dbReference>
<dbReference type="HAMAP" id="MF_01346">
    <property type="entry name" value="ATP_synth_alpha_bact"/>
    <property type="match status" value="1"/>
</dbReference>
<dbReference type="InterPro" id="IPR023366">
    <property type="entry name" value="ATP_synth_asu-like_sf"/>
</dbReference>
<dbReference type="InterPro" id="IPR000793">
    <property type="entry name" value="ATP_synth_asu_C"/>
</dbReference>
<dbReference type="InterPro" id="IPR038376">
    <property type="entry name" value="ATP_synth_asu_C_sf"/>
</dbReference>
<dbReference type="InterPro" id="IPR033732">
    <property type="entry name" value="ATP_synth_F1_a_nt-bd_dom"/>
</dbReference>
<dbReference type="InterPro" id="IPR005294">
    <property type="entry name" value="ATP_synth_F1_asu"/>
</dbReference>
<dbReference type="InterPro" id="IPR004100">
    <property type="entry name" value="ATPase_F1/V1/A1_a/bsu_N"/>
</dbReference>
<dbReference type="InterPro" id="IPR036121">
    <property type="entry name" value="ATPase_F1/V1/A1_a/bsu_N_sf"/>
</dbReference>
<dbReference type="InterPro" id="IPR000194">
    <property type="entry name" value="ATPase_F1/V1/A1_a/bsu_nucl-bd"/>
</dbReference>
<dbReference type="InterPro" id="IPR027417">
    <property type="entry name" value="P-loop_NTPase"/>
</dbReference>
<dbReference type="NCBIfam" id="TIGR00962">
    <property type="entry name" value="atpA"/>
    <property type="match status" value="1"/>
</dbReference>
<dbReference type="NCBIfam" id="NF009884">
    <property type="entry name" value="PRK13343.1"/>
    <property type="match status" value="1"/>
</dbReference>
<dbReference type="PANTHER" id="PTHR48082">
    <property type="entry name" value="ATP SYNTHASE SUBUNIT ALPHA, MITOCHONDRIAL"/>
    <property type="match status" value="1"/>
</dbReference>
<dbReference type="PANTHER" id="PTHR48082:SF2">
    <property type="entry name" value="ATP SYNTHASE SUBUNIT ALPHA, MITOCHONDRIAL"/>
    <property type="match status" value="1"/>
</dbReference>
<dbReference type="Pfam" id="PF00006">
    <property type="entry name" value="ATP-synt_ab"/>
    <property type="match status" value="1"/>
</dbReference>
<dbReference type="Pfam" id="PF00306">
    <property type="entry name" value="ATP-synt_ab_C"/>
    <property type="match status" value="1"/>
</dbReference>
<dbReference type="Pfam" id="PF02874">
    <property type="entry name" value="ATP-synt_ab_N"/>
    <property type="match status" value="1"/>
</dbReference>
<dbReference type="PIRSF" id="PIRSF039088">
    <property type="entry name" value="F_ATPase_subunit_alpha"/>
    <property type="match status" value="1"/>
</dbReference>
<dbReference type="SUPFAM" id="SSF47917">
    <property type="entry name" value="C-terminal domain of alpha and beta subunits of F1 ATP synthase"/>
    <property type="match status" value="1"/>
</dbReference>
<dbReference type="SUPFAM" id="SSF50615">
    <property type="entry name" value="N-terminal domain of alpha and beta subunits of F1 ATP synthase"/>
    <property type="match status" value="1"/>
</dbReference>
<dbReference type="SUPFAM" id="SSF52540">
    <property type="entry name" value="P-loop containing nucleoside triphosphate hydrolases"/>
    <property type="match status" value="1"/>
</dbReference>